<accession>A8ADB3</accession>
<gene>
    <name evidence="1" type="primary">tmcA</name>
    <name type="ordered locus">CKO_00313</name>
</gene>
<sequence length="671" mass="74172">MSDNDALRALTAQMAQEGIRRLLVLSGDVSWCRERALALREALAGDWLWVATDAPAAPHCTPQALQTLLGREFRHAVFDAQLGFDASAFAALSGTLRAGSWLVLLTPPYSAWESRPDADSLRWSDCPQPVATPHFIQHLKRVMARDEQTLHWQQSQPFSWPRFPARPHWQPATGEPQPEQAAILRHLLRMPPGVAAVTAARGRGKSALAGQLISRMSGTAIVTAPSKAATDVLAQFAGEKFRFLAPDALLAGTETADWLIVDEAAAIPAPLLHRLASRFSRILLTTTVQGYEGTGRGFLLKFCARFPHLRRFELRQPVRWAQGCPLEQWVGEALIFDDETFAHAPQGAIRFSAFTQALWHTGPAQPLAVYQLLSGAHYRTSPLDLRRMMDAPGQHFLGAFTAERVAGAAWLVEEGRLSAALSQAVWAGYRRPRGNLVAQSLAAHGGDPLAATLTGRRVSRIAVHPARQREGIGQQLIAEAYGGASRCDYLSVSFGYTAELWRFWQRCGFVLVRMGNHKEASSGCYTAMALLPISEAGARLAHREHQRLRRDAEILARWNGEAIPVIPLKASTLNDDDWDELAGFAFAHRPLLTSLGSLSRLLERCELALPALRGRLEEKCSDANLCIRLGLPGRKALLVAQRREVAHALTALDDERAQRLRERVLQWQFFH</sequence>
<reference key="1">
    <citation type="submission" date="2007-08" db="EMBL/GenBank/DDBJ databases">
        <authorList>
            <consortium name="The Citrobacter koseri Genome Sequencing Project"/>
            <person name="McClelland M."/>
            <person name="Sanderson E.K."/>
            <person name="Porwollik S."/>
            <person name="Spieth J."/>
            <person name="Clifton W.S."/>
            <person name="Latreille P."/>
            <person name="Courtney L."/>
            <person name="Wang C."/>
            <person name="Pepin K."/>
            <person name="Bhonagiri V."/>
            <person name="Nash W."/>
            <person name="Johnson M."/>
            <person name="Thiruvilangam P."/>
            <person name="Wilson R."/>
        </authorList>
    </citation>
    <scope>NUCLEOTIDE SEQUENCE [LARGE SCALE GENOMIC DNA]</scope>
    <source>
        <strain>ATCC BAA-895 / CDC 4225-83 / SGSC4696</strain>
    </source>
</reference>
<dbReference type="EC" id="2.3.1.193" evidence="1"/>
<dbReference type="EMBL" id="CP000822">
    <property type="protein sequence ID" value="ABV11476.1"/>
    <property type="molecule type" value="Genomic_DNA"/>
</dbReference>
<dbReference type="RefSeq" id="WP_012131306.1">
    <property type="nucleotide sequence ID" value="NC_009792.1"/>
</dbReference>
<dbReference type="SMR" id="A8ADB3"/>
<dbReference type="STRING" id="290338.CKO_00313"/>
<dbReference type="GeneID" id="45134588"/>
<dbReference type="KEGG" id="cko:CKO_00313"/>
<dbReference type="HOGENOM" id="CLU_004652_1_1_6"/>
<dbReference type="OrthoDB" id="5578851at2"/>
<dbReference type="Proteomes" id="UP000008148">
    <property type="component" value="Chromosome"/>
</dbReference>
<dbReference type="GO" id="GO:0005737">
    <property type="term" value="C:cytoplasm"/>
    <property type="evidence" value="ECO:0007669"/>
    <property type="project" value="UniProtKB-SubCell"/>
</dbReference>
<dbReference type="GO" id="GO:1990883">
    <property type="term" value="F:18S rRNA cytidine N-acetyltransferase activity"/>
    <property type="evidence" value="ECO:0007669"/>
    <property type="project" value="TreeGrafter"/>
</dbReference>
<dbReference type="GO" id="GO:0005524">
    <property type="term" value="F:ATP binding"/>
    <property type="evidence" value="ECO:0007669"/>
    <property type="project" value="UniProtKB-UniRule"/>
</dbReference>
<dbReference type="GO" id="GO:0000049">
    <property type="term" value="F:tRNA binding"/>
    <property type="evidence" value="ECO:0007669"/>
    <property type="project" value="UniProtKB-UniRule"/>
</dbReference>
<dbReference type="GO" id="GO:0051392">
    <property type="term" value="F:tRNA N4-acetyltransferase activity"/>
    <property type="evidence" value="ECO:0007669"/>
    <property type="project" value="UniProtKB-UniRule"/>
</dbReference>
<dbReference type="GO" id="GO:1904812">
    <property type="term" value="P:rRNA acetylation involved in maturation of SSU-rRNA"/>
    <property type="evidence" value="ECO:0007669"/>
    <property type="project" value="TreeGrafter"/>
</dbReference>
<dbReference type="GO" id="GO:0051391">
    <property type="term" value="P:tRNA acetylation"/>
    <property type="evidence" value="ECO:0007669"/>
    <property type="project" value="UniProtKB-UniRule"/>
</dbReference>
<dbReference type="GO" id="GO:0002101">
    <property type="term" value="P:tRNA wobble cytosine modification"/>
    <property type="evidence" value="ECO:0007669"/>
    <property type="project" value="UniProtKB-UniRule"/>
</dbReference>
<dbReference type="FunFam" id="3.40.50.11040:FF:000003">
    <property type="entry name" value="tRNA(Met) cytidine acetyltransferase TmcA"/>
    <property type="match status" value="1"/>
</dbReference>
<dbReference type="FunFam" id="3.40.50.300:FF:001011">
    <property type="entry name" value="tRNA(Met) cytidine acetyltransferase TmcA"/>
    <property type="match status" value="1"/>
</dbReference>
<dbReference type="FunFam" id="3.40.630.30:FF:000054">
    <property type="entry name" value="tRNA(Met) cytidine acetyltransferase TmcA"/>
    <property type="match status" value="1"/>
</dbReference>
<dbReference type="Gene3D" id="3.40.50.11040">
    <property type="match status" value="1"/>
</dbReference>
<dbReference type="Gene3D" id="3.40.630.30">
    <property type="match status" value="1"/>
</dbReference>
<dbReference type="Gene3D" id="3.40.50.300">
    <property type="entry name" value="P-loop containing nucleotide triphosphate hydrolases"/>
    <property type="match status" value="1"/>
</dbReference>
<dbReference type="Gene3D" id="1.20.120.890">
    <property type="entry name" value="tRNA(Met) cytidine acetyltransferase, tail domain"/>
    <property type="match status" value="1"/>
</dbReference>
<dbReference type="HAMAP" id="MF_01886">
    <property type="entry name" value="tRNA_acetyltr_TmcA"/>
    <property type="match status" value="1"/>
</dbReference>
<dbReference type="InterPro" id="IPR016181">
    <property type="entry name" value="Acyl_CoA_acyltransferase"/>
</dbReference>
<dbReference type="InterPro" id="IPR000182">
    <property type="entry name" value="GNAT_dom"/>
</dbReference>
<dbReference type="InterPro" id="IPR007807">
    <property type="entry name" value="NAT10/TcmA_helicase"/>
</dbReference>
<dbReference type="InterPro" id="IPR027417">
    <property type="entry name" value="P-loop_NTPase"/>
</dbReference>
<dbReference type="InterPro" id="IPR032672">
    <property type="entry name" value="TmcA/NAT10/Kre33"/>
</dbReference>
<dbReference type="InterPro" id="IPR038321">
    <property type="entry name" value="TmcA_C_sf"/>
</dbReference>
<dbReference type="InterPro" id="IPR013562">
    <property type="entry name" value="TmcA_N"/>
</dbReference>
<dbReference type="InterPro" id="IPR033442">
    <property type="entry name" value="TmcA_tRNA_bind"/>
</dbReference>
<dbReference type="InterPro" id="IPR024914">
    <property type="entry name" value="tRNA_acetyltr_TmcA"/>
</dbReference>
<dbReference type="PANTHER" id="PTHR10925">
    <property type="entry name" value="N-ACETYLTRANSFERASE 10"/>
    <property type="match status" value="1"/>
</dbReference>
<dbReference type="PANTHER" id="PTHR10925:SF5">
    <property type="entry name" value="RNA CYTIDINE ACETYLTRANSFERASE"/>
    <property type="match status" value="1"/>
</dbReference>
<dbReference type="Pfam" id="PF13718">
    <property type="entry name" value="GNAT_acetyltr_2"/>
    <property type="match status" value="2"/>
</dbReference>
<dbReference type="Pfam" id="PF05127">
    <property type="entry name" value="NAT10_TcmA_helicase"/>
    <property type="match status" value="1"/>
</dbReference>
<dbReference type="Pfam" id="PF08351">
    <property type="entry name" value="TmcA_N"/>
    <property type="match status" value="1"/>
</dbReference>
<dbReference type="Pfam" id="PF17176">
    <property type="entry name" value="tRNA_bind_3"/>
    <property type="match status" value="1"/>
</dbReference>
<dbReference type="SUPFAM" id="SSF55729">
    <property type="entry name" value="Acyl-CoA N-acyltransferases (Nat)"/>
    <property type="match status" value="1"/>
</dbReference>
<dbReference type="SUPFAM" id="SSF52540">
    <property type="entry name" value="P-loop containing nucleoside triphosphate hydrolases"/>
    <property type="match status" value="1"/>
</dbReference>
<dbReference type="PROSITE" id="PS51186">
    <property type="entry name" value="GNAT"/>
    <property type="match status" value="1"/>
</dbReference>
<organism>
    <name type="scientific">Citrobacter koseri (strain ATCC BAA-895 / CDC 4225-83 / SGSC4696)</name>
    <dbReference type="NCBI Taxonomy" id="290338"/>
    <lineage>
        <taxon>Bacteria</taxon>
        <taxon>Pseudomonadati</taxon>
        <taxon>Pseudomonadota</taxon>
        <taxon>Gammaproteobacteria</taxon>
        <taxon>Enterobacterales</taxon>
        <taxon>Enterobacteriaceae</taxon>
        <taxon>Citrobacter</taxon>
    </lineage>
</organism>
<protein>
    <recommendedName>
        <fullName evidence="1">tRNA(Met) cytidine acetyltransferase TmcA</fullName>
        <ecNumber evidence="1">2.3.1.193</ecNumber>
    </recommendedName>
</protein>
<keyword id="KW-0012">Acyltransferase</keyword>
<keyword id="KW-0067">ATP-binding</keyword>
<keyword id="KW-0963">Cytoplasm</keyword>
<keyword id="KW-0547">Nucleotide-binding</keyword>
<keyword id="KW-1185">Reference proteome</keyword>
<keyword id="KW-0694">RNA-binding</keyword>
<keyword id="KW-0808">Transferase</keyword>
<keyword id="KW-0819">tRNA processing</keyword>
<keyword id="KW-0820">tRNA-binding</keyword>
<proteinExistence type="inferred from homology"/>
<feature type="chain" id="PRO_0000403118" description="tRNA(Met) cytidine acetyltransferase TmcA">
    <location>
        <begin position="1"/>
        <end position="671"/>
    </location>
</feature>
<feature type="domain" description="N-acetyltransferase" evidence="1">
    <location>
        <begin position="349"/>
        <end position="531"/>
    </location>
</feature>
<feature type="binding site" evidence="1">
    <location>
        <position position="180"/>
    </location>
    <ligand>
        <name>ATP</name>
        <dbReference type="ChEBI" id="CHEBI:30616"/>
    </ligand>
</feature>
<feature type="binding site" evidence="1">
    <location>
        <begin position="202"/>
        <end position="211"/>
    </location>
    <ligand>
        <name>ATP</name>
        <dbReference type="ChEBI" id="CHEBI:30616"/>
    </ligand>
</feature>
<feature type="binding site" evidence="1">
    <location>
        <position position="319"/>
    </location>
    <ligand>
        <name>ATP</name>
        <dbReference type="ChEBI" id="CHEBI:30616"/>
    </ligand>
</feature>
<feature type="binding site" evidence="1">
    <location>
        <begin position="461"/>
        <end position="463"/>
    </location>
    <ligand>
        <name>acetyl-CoA</name>
        <dbReference type="ChEBI" id="CHEBI:57288"/>
    </ligand>
</feature>
<feature type="binding site" evidence="1">
    <location>
        <begin position="468"/>
        <end position="474"/>
    </location>
    <ligand>
        <name>acetyl-CoA</name>
        <dbReference type="ChEBI" id="CHEBI:57288"/>
    </ligand>
</feature>
<feature type="binding site" evidence="1">
    <location>
        <position position="499"/>
    </location>
    <ligand>
        <name>acetyl-CoA</name>
        <dbReference type="ChEBI" id="CHEBI:57288"/>
    </ligand>
</feature>
<feature type="binding site" evidence="1">
    <location>
        <position position="506"/>
    </location>
    <ligand>
        <name>acetyl-CoA</name>
        <dbReference type="ChEBI" id="CHEBI:57288"/>
    </ligand>
</feature>
<comment type="function">
    <text evidence="1">Catalyzes the formation of N(4)-acetylcytidine (ac(4)C) at the wobble position of tRNA(Met), by using acetyl-CoA as an acetyl donor and ATP (or GTP).</text>
</comment>
<comment type="catalytic activity">
    <reaction evidence="1">
        <text>cytidine(34) in elongator tRNA(Met) + acetyl-CoA + ATP + H2O = N(4)-acetylcytidine(34) in elongator tRNA(Met) + ADP + phosphate + CoA + H(+)</text>
        <dbReference type="Rhea" id="RHEA:43788"/>
        <dbReference type="Rhea" id="RHEA-COMP:10693"/>
        <dbReference type="Rhea" id="RHEA-COMP:10694"/>
        <dbReference type="ChEBI" id="CHEBI:15377"/>
        <dbReference type="ChEBI" id="CHEBI:15378"/>
        <dbReference type="ChEBI" id="CHEBI:30616"/>
        <dbReference type="ChEBI" id="CHEBI:43474"/>
        <dbReference type="ChEBI" id="CHEBI:57287"/>
        <dbReference type="ChEBI" id="CHEBI:57288"/>
        <dbReference type="ChEBI" id="CHEBI:74900"/>
        <dbReference type="ChEBI" id="CHEBI:82748"/>
        <dbReference type="ChEBI" id="CHEBI:456216"/>
        <dbReference type="EC" id="2.3.1.193"/>
    </reaction>
</comment>
<comment type="subcellular location">
    <subcellularLocation>
        <location evidence="1">Cytoplasm</location>
    </subcellularLocation>
</comment>
<comment type="similarity">
    <text evidence="1">Belongs to the RNA cytidine acetyltransferase family. TmcA subfamily.</text>
</comment>
<evidence type="ECO:0000255" key="1">
    <source>
        <dbReference type="HAMAP-Rule" id="MF_01886"/>
    </source>
</evidence>
<name>TMCA_CITK8</name>